<name>MRAY_ERYLH</name>
<protein>
    <recommendedName>
        <fullName evidence="1">Phospho-N-acetylmuramoyl-pentapeptide-transferase</fullName>
        <ecNumber evidence="1">2.7.8.13</ecNumber>
    </recommendedName>
    <alternativeName>
        <fullName evidence="1">UDP-MurNAc-pentapeptide phosphotransferase</fullName>
    </alternativeName>
</protein>
<accession>Q2NCZ3</accession>
<proteinExistence type="inferred from homology"/>
<evidence type="ECO:0000255" key="1">
    <source>
        <dbReference type="HAMAP-Rule" id="MF_00038"/>
    </source>
</evidence>
<gene>
    <name evidence="1" type="primary">mraY</name>
    <name type="ordered locus">ELI_01780</name>
</gene>
<organism>
    <name type="scientific">Erythrobacter litoralis (strain HTCC2594)</name>
    <dbReference type="NCBI Taxonomy" id="314225"/>
    <lineage>
        <taxon>Bacteria</taxon>
        <taxon>Pseudomonadati</taxon>
        <taxon>Pseudomonadota</taxon>
        <taxon>Alphaproteobacteria</taxon>
        <taxon>Sphingomonadales</taxon>
        <taxon>Erythrobacteraceae</taxon>
        <taxon>Erythrobacter/Porphyrobacter group</taxon>
        <taxon>Erythrobacter</taxon>
    </lineage>
</organism>
<reference key="1">
    <citation type="journal article" date="2009" name="J. Bacteriol.">
        <title>Complete genome sequence of Erythrobacter litoralis HTCC2594.</title>
        <authorList>
            <person name="Oh H.M."/>
            <person name="Giovannoni S.J."/>
            <person name="Ferriera S."/>
            <person name="Johnson J."/>
            <person name="Cho J.C."/>
        </authorList>
    </citation>
    <scope>NUCLEOTIDE SEQUENCE [LARGE SCALE GENOMIC DNA]</scope>
    <source>
        <strain>HTCC2594</strain>
    </source>
</reference>
<feature type="chain" id="PRO_1000002972" description="Phospho-N-acetylmuramoyl-pentapeptide-transferase">
    <location>
        <begin position="1"/>
        <end position="356"/>
    </location>
</feature>
<feature type="transmembrane region" description="Helical" evidence="1">
    <location>
        <begin position="27"/>
        <end position="47"/>
    </location>
</feature>
<feature type="transmembrane region" description="Helical" evidence="1">
    <location>
        <begin position="73"/>
        <end position="93"/>
    </location>
</feature>
<feature type="transmembrane region" description="Helical" evidence="1">
    <location>
        <begin position="97"/>
        <end position="117"/>
    </location>
</feature>
<feature type="transmembrane region" description="Helical" evidence="1">
    <location>
        <begin position="138"/>
        <end position="158"/>
    </location>
</feature>
<feature type="transmembrane region" description="Helical" evidence="1">
    <location>
        <begin position="165"/>
        <end position="185"/>
    </location>
</feature>
<feature type="transmembrane region" description="Helical" evidence="1">
    <location>
        <begin position="195"/>
        <end position="215"/>
    </location>
</feature>
<feature type="transmembrane region" description="Helical" evidence="1">
    <location>
        <begin position="232"/>
        <end position="252"/>
    </location>
</feature>
<feature type="transmembrane region" description="Helical" evidence="1">
    <location>
        <begin position="258"/>
        <end position="278"/>
    </location>
</feature>
<feature type="transmembrane region" description="Helical" evidence="1">
    <location>
        <begin position="284"/>
        <end position="304"/>
    </location>
</feature>
<feature type="transmembrane region" description="Helical" evidence="1">
    <location>
        <begin position="333"/>
        <end position="353"/>
    </location>
</feature>
<sequence length="356" mass="38500">MLYLIAEWLGFEGALNLIRYQTFRTGATLMTALVIGLIIGPRFINMLRVRQGKGQPIRDDGPQSHLAKRGTPTMGGLMIIVSLVLSLVLWMDLRSPFVWACLAVTVGFGLIGFLDDLDKVTKNSHRGVSAKVRLLMEFLVAGIASYIIVSQINTWLYVPFVSDRAIPLGPFYYVFAAVVIVGAGNAVNLTDGLDGLAIMPVIIAAGTFAIIAYLAGRVDYSEYLGIPHVPGAGELAIFCAAIMGAGLAFLWFNAPPAAVFMGDTGSLALGGALGAIAVASHHEIVLAIVGGLFVFEALSVIIQVFWFKRTGKRVFRMAPIHHHFEQLGWSESKVVIRFWIVSIVLALMGLATLKLR</sequence>
<comment type="function">
    <text evidence="1">Catalyzes the initial step of the lipid cycle reactions in the biosynthesis of the cell wall peptidoglycan: transfers peptidoglycan precursor phospho-MurNAc-pentapeptide from UDP-MurNAc-pentapeptide onto the lipid carrier undecaprenyl phosphate, yielding undecaprenyl-pyrophosphoryl-MurNAc-pentapeptide, known as lipid I.</text>
</comment>
<comment type="catalytic activity">
    <reaction evidence="1">
        <text>UDP-N-acetyl-alpha-D-muramoyl-L-alanyl-gamma-D-glutamyl-meso-2,6-diaminopimeloyl-D-alanyl-D-alanine + di-trans,octa-cis-undecaprenyl phosphate = di-trans,octa-cis-undecaprenyl diphospho-N-acetyl-alpha-D-muramoyl-L-alanyl-D-glutamyl-meso-2,6-diaminopimeloyl-D-alanyl-D-alanine + UMP</text>
        <dbReference type="Rhea" id="RHEA:28386"/>
        <dbReference type="ChEBI" id="CHEBI:57865"/>
        <dbReference type="ChEBI" id="CHEBI:60392"/>
        <dbReference type="ChEBI" id="CHEBI:61386"/>
        <dbReference type="ChEBI" id="CHEBI:61387"/>
        <dbReference type="EC" id="2.7.8.13"/>
    </reaction>
</comment>
<comment type="cofactor">
    <cofactor evidence="1">
        <name>Mg(2+)</name>
        <dbReference type="ChEBI" id="CHEBI:18420"/>
    </cofactor>
</comment>
<comment type="pathway">
    <text evidence="1">Cell wall biogenesis; peptidoglycan biosynthesis.</text>
</comment>
<comment type="subcellular location">
    <subcellularLocation>
        <location evidence="1">Cell inner membrane</location>
        <topology evidence="1">Multi-pass membrane protein</topology>
    </subcellularLocation>
</comment>
<comment type="similarity">
    <text evidence="1">Belongs to the glycosyltransferase 4 family. MraY subfamily.</text>
</comment>
<dbReference type="EC" id="2.7.8.13" evidence="1"/>
<dbReference type="EMBL" id="CP000157">
    <property type="protein sequence ID" value="ABC62448.1"/>
    <property type="molecule type" value="Genomic_DNA"/>
</dbReference>
<dbReference type="RefSeq" id="WP_011413324.1">
    <property type="nucleotide sequence ID" value="NC_007722.1"/>
</dbReference>
<dbReference type="SMR" id="Q2NCZ3"/>
<dbReference type="STRING" id="314225.ELI_01780"/>
<dbReference type="KEGG" id="eli:ELI_01780"/>
<dbReference type="eggNOG" id="COG0472">
    <property type="taxonomic scope" value="Bacteria"/>
</dbReference>
<dbReference type="HOGENOM" id="CLU_023982_0_0_5"/>
<dbReference type="OrthoDB" id="9805475at2"/>
<dbReference type="UniPathway" id="UPA00219"/>
<dbReference type="Proteomes" id="UP000008808">
    <property type="component" value="Chromosome"/>
</dbReference>
<dbReference type="GO" id="GO:0005886">
    <property type="term" value="C:plasma membrane"/>
    <property type="evidence" value="ECO:0007669"/>
    <property type="project" value="UniProtKB-SubCell"/>
</dbReference>
<dbReference type="GO" id="GO:0046872">
    <property type="term" value="F:metal ion binding"/>
    <property type="evidence" value="ECO:0007669"/>
    <property type="project" value="UniProtKB-KW"/>
</dbReference>
<dbReference type="GO" id="GO:0008963">
    <property type="term" value="F:phospho-N-acetylmuramoyl-pentapeptide-transferase activity"/>
    <property type="evidence" value="ECO:0007669"/>
    <property type="project" value="UniProtKB-UniRule"/>
</dbReference>
<dbReference type="GO" id="GO:0051992">
    <property type="term" value="F:UDP-N-acetylmuramoyl-L-alanyl-D-glutamyl-meso-2,6-diaminopimelyl-D-alanyl-D-alanine:undecaprenyl-phosphate transferase activity"/>
    <property type="evidence" value="ECO:0007669"/>
    <property type="project" value="RHEA"/>
</dbReference>
<dbReference type="GO" id="GO:0051301">
    <property type="term" value="P:cell division"/>
    <property type="evidence" value="ECO:0007669"/>
    <property type="project" value="UniProtKB-KW"/>
</dbReference>
<dbReference type="GO" id="GO:0071555">
    <property type="term" value="P:cell wall organization"/>
    <property type="evidence" value="ECO:0007669"/>
    <property type="project" value="UniProtKB-KW"/>
</dbReference>
<dbReference type="GO" id="GO:0009252">
    <property type="term" value="P:peptidoglycan biosynthetic process"/>
    <property type="evidence" value="ECO:0007669"/>
    <property type="project" value="UniProtKB-UniRule"/>
</dbReference>
<dbReference type="GO" id="GO:0008360">
    <property type="term" value="P:regulation of cell shape"/>
    <property type="evidence" value="ECO:0007669"/>
    <property type="project" value="UniProtKB-KW"/>
</dbReference>
<dbReference type="CDD" id="cd06852">
    <property type="entry name" value="GT_MraY"/>
    <property type="match status" value="1"/>
</dbReference>
<dbReference type="HAMAP" id="MF_00038">
    <property type="entry name" value="MraY"/>
    <property type="match status" value="1"/>
</dbReference>
<dbReference type="InterPro" id="IPR000715">
    <property type="entry name" value="Glycosyl_transferase_4"/>
</dbReference>
<dbReference type="InterPro" id="IPR003524">
    <property type="entry name" value="PNAcMuramoyl-5peptid_Trfase"/>
</dbReference>
<dbReference type="InterPro" id="IPR018480">
    <property type="entry name" value="PNAcMuramoyl-5peptid_Trfase_CS"/>
</dbReference>
<dbReference type="NCBIfam" id="TIGR00445">
    <property type="entry name" value="mraY"/>
    <property type="match status" value="1"/>
</dbReference>
<dbReference type="PANTHER" id="PTHR22926">
    <property type="entry name" value="PHOSPHO-N-ACETYLMURAMOYL-PENTAPEPTIDE-TRANSFERASE"/>
    <property type="match status" value="1"/>
</dbReference>
<dbReference type="PANTHER" id="PTHR22926:SF5">
    <property type="entry name" value="PHOSPHO-N-ACETYLMURAMOYL-PENTAPEPTIDE-TRANSFERASE HOMOLOG"/>
    <property type="match status" value="1"/>
</dbReference>
<dbReference type="Pfam" id="PF00953">
    <property type="entry name" value="Glycos_transf_4"/>
    <property type="match status" value="1"/>
</dbReference>
<dbReference type="Pfam" id="PF10555">
    <property type="entry name" value="MraY_sig1"/>
    <property type="match status" value="1"/>
</dbReference>
<dbReference type="PROSITE" id="PS01347">
    <property type="entry name" value="MRAY_1"/>
    <property type="match status" value="1"/>
</dbReference>
<dbReference type="PROSITE" id="PS01348">
    <property type="entry name" value="MRAY_2"/>
    <property type="match status" value="1"/>
</dbReference>
<keyword id="KW-0131">Cell cycle</keyword>
<keyword id="KW-0132">Cell division</keyword>
<keyword id="KW-0997">Cell inner membrane</keyword>
<keyword id="KW-1003">Cell membrane</keyword>
<keyword id="KW-0133">Cell shape</keyword>
<keyword id="KW-0961">Cell wall biogenesis/degradation</keyword>
<keyword id="KW-0460">Magnesium</keyword>
<keyword id="KW-0472">Membrane</keyword>
<keyword id="KW-0479">Metal-binding</keyword>
<keyword id="KW-0573">Peptidoglycan synthesis</keyword>
<keyword id="KW-1185">Reference proteome</keyword>
<keyword id="KW-0808">Transferase</keyword>
<keyword id="KW-0812">Transmembrane</keyword>
<keyword id="KW-1133">Transmembrane helix</keyword>